<sequence length="110" mass="12585">MRQVTIPLIQSKSMFCVIYRSSKRDQTYLYVEKKDDFSRVPEALMKGFGQPQLAMMLPLDGRKKLVNAELEKVKQALSEQGYYLQLPPPPEDLLKQHLSSVGQNTSPADR</sequence>
<dbReference type="EMBL" id="AM933173">
    <property type="protein sequence ID" value="CAR37181.1"/>
    <property type="molecule type" value="Genomic_DNA"/>
</dbReference>
<dbReference type="SMR" id="B5R8Y8"/>
<dbReference type="KEGG" id="seg:SG1304"/>
<dbReference type="HOGENOM" id="CLU_155118_1_0_6"/>
<dbReference type="Proteomes" id="UP000008321">
    <property type="component" value="Chromosome"/>
</dbReference>
<dbReference type="Gene3D" id="3.10.510.20">
    <property type="entry name" value="YcgL domain"/>
    <property type="match status" value="1"/>
</dbReference>
<dbReference type="HAMAP" id="MF_01866">
    <property type="entry name" value="UPF0745"/>
    <property type="match status" value="1"/>
</dbReference>
<dbReference type="InterPro" id="IPR038068">
    <property type="entry name" value="YcgL-like_sf"/>
</dbReference>
<dbReference type="InterPro" id="IPR027354">
    <property type="entry name" value="YcgL_dom"/>
</dbReference>
<dbReference type="PANTHER" id="PTHR38109">
    <property type="entry name" value="PROTEIN YCGL"/>
    <property type="match status" value="1"/>
</dbReference>
<dbReference type="PANTHER" id="PTHR38109:SF1">
    <property type="entry name" value="PROTEIN YCGL"/>
    <property type="match status" value="1"/>
</dbReference>
<dbReference type="Pfam" id="PF05166">
    <property type="entry name" value="YcgL"/>
    <property type="match status" value="1"/>
</dbReference>
<dbReference type="SUPFAM" id="SSF160191">
    <property type="entry name" value="YcgL-like"/>
    <property type="match status" value="1"/>
</dbReference>
<dbReference type="PROSITE" id="PS51648">
    <property type="entry name" value="YCGL"/>
    <property type="match status" value="1"/>
</dbReference>
<reference key="1">
    <citation type="journal article" date="2008" name="Genome Res.">
        <title>Comparative genome analysis of Salmonella enteritidis PT4 and Salmonella gallinarum 287/91 provides insights into evolutionary and host adaptation pathways.</title>
        <authorList>
            <person name="Thomson N.R."/>
            <person name="Clayton D.J."/>
            <person name="Windhorst D."/>
            <person name="Vernikos G."/>
            <person name="Davidson S."/>
            <person name="Churcher C."/>
            <person name="Quail M.A."/>
            <person name="Stevens M."/>
            <person name="Jones M.A."/>
            <person name="Watson M."/>
            <person name="Barron A."/>
            <person name="Layton A."/>
            <person name="Pickard D."/>
            <person name="Kingsley R.A."/>
            <person name="Bignell A."/>
            <person name="Clark L."/>
            <person name="Harris B."/>
            <person name="Ormond D."/>
            <person name="Abdellah Z."/>
            <person name="Brooks K."/>
            <person name="Cherevach I."/>
            <person name="Chillingworth T."/>
            <person name="Woodward J."/>
            <person name="Norberczak H."/>
            <person name="Lord A."/>
            <person name="Arrowsmith C."/>
            <person name="Jagels K."/>
            <person name="Moule S."/>
            <person name="Mungall K."/>
            <person name="Saunders M."/>
            <person name="Whitehead S."/>
            <person name="Chabalgoity J.A."/>
            <person name="Maskell D."/>
            <person name="Humphreys T."/>
            <person name="Roberts M."/>
            <person name="Barrow P.A."/>
            <person name="Dougan G."/>
            <person name="Parkhill J."/>
        </authorList>
    </citation>
    <scope>NUCLEOTIDE SEQUENCE [LARGE SCALE GENOMIC DNA]</scope>
    <source>
        <strain>287/91 / NCTC 13346</strain>
    </source>
</reference>
<organism>
    <name type="scientific">Salmonella gallinarum (strain 287/91 / NCTC 13346)</name>
    <dbReference type="NCBI Taxonomy" id="550538"/>
    <lineage>
        <taxon>Bacteria</taxon>
        <taxon>Pseudomonadati</taxon>
        <taxon>Pseudomonadota</taxon>
        <taxon>Gammaproteobacteria</taxon>
        <taxon>Enterobacterales</taxon>
        <taxon>Enterobacteriaceae</taxon>
        <taxon>Salmonella</taxon>
    </lineage>
</organism>
<gene>
    <name evidence="1" type="primary">ycgL</name>
    <name type="ordered locus">SG1304</name>
</gene>
<protein>
    <recommendedName>
        <fullName evidence="1">Protein YcgL</fullName>
    </recommendedName>
</protein>
<proteinExistence type="inferred from homology"/>
<feature type="chain" id="PRO_0000375353" description="Protein YcgL">
    <location>
        <begin position="1"/>
        <end position="110"/>
    </location>
</feature>
<feature type="domain" description="YcgL" evidence="1">
    <location>
        <begin position="14"/>
        <end position="98"/>
    </location>
</feature>
<feature type="region of interest" description="Disordered" evidence="2">
    <location>
        <begin position="87"/>
        <end position="110"/>
    </location>
</feature>
<feature type="compositionally biased region" description="Polar residues" evidence="2">
    <location>
        <begin position="97"/>
        <end position="110"/>
    </location>
</feature>
<accession>B5R8Y8</accession>
<evidence type="ECO:0000255" key="1">
    <source>
        <dbReference type="HAMAP-Rule" id="MF_01866"/>
    </source>
</evidence>
<evidence type="ECO:0000256" key="2">
    <source>
        <dbReference type="SAM" id="MobiDB-lite"/>
    </source>
</evidence>
<name>YCGL_SALG2</name>